<feature type="chain" id="PRO_0000075584" description="Ribitol-5-phosphate cytidylyltransferase">
    <location>
        <begin position="1"/>
        <end position="237"/>
    </location>
</feature>
<feature type="binding site" evidence="1">
    <location>
        <begin position="7"/>
        <end position="10"/>
    </location>
    <ligand>
        <name>CTP</name>
        <dbReference type="ChEBI" id="CHEBI:37563"/>
    </ligand>
</feature>
<feature type="binding site" evidence="1">
    <location>
        <begin position="80"/>
        <end position="86"/>
    </location>
    <ligand>
        <name>CTP</name>
        <dbReference type="ChEBI" id="CHEBI:37563"/>
    </ligand>
</feature>
<feature type="site" description="Transition state stabilizer" evidence="1">
    <location>
        <position position="14"/>
    </location>
</feature>
<feature type="site" description="Transition state stabilizer" evidence="1">
    <location>
        <position position="22"/>
    </location>
</feature>
<feature type="site" description="Positions ribitol 5-phosphate for the nucleophilic attack" evidence="1">
    <location>
        <position position="159"/>
    </location>
</feature>
<feature type="site" description="Positions ribitol 5-phosphate for the nucleophilic attack" evidence="1">
    <location>
        <position position="216"/>
    </location>
</feature>
<name>TARI_LISIN</name>
<keyword id="KW-0961">Cell wall biogenesis/degradation</keyword>
<keyword id="KW-0548">Nucleotidyltransferase</keyword>
<keyword id="KW-0777">Teichoic acid biosynthesis</keyword>
<keyword id="KW-0808">Transferase</keyword>
<accession>Q92CV0</accession>
<sequence>MIYAQILAGGKGTRMGNVSMPKQFLPLNGKPIIVHTVEKFILNTRFDKILISSPKEWMNHAEDNIKKYISDDRIVVIEGGEDRNETIMNGIRYVEKTFGLNDEDIIVTHDAVRPFLTHRIIEENIDAAIETGAVDTVIEALDTIVESSNHEFITDIPVRDQMYQGQTPQSFNMKKVYNHYQNLSAEKKQILTDACKICLLAGDQVKLVKGEIFNIKITTPYDLKVANAIIQERIAND</sequence>
<proteinExistence type="inferred from homology"/>
<protein>
    <recommendedName>
        <fullName evidence="1">Ribitol-5-phosphate cytidylyltransferase</fullName>
        <ecNumber evidence="1">2.7.7.40</ecNumber>
    </recommendedName>
</protein>
<dbReference type="EC" id="2.7.7.40" evidence="1"/>
<dbReference type="EMBL" id="AL596167">
    <property type="protein sequence ID" value="CAC96302.1"/>
    <property type="molecule type" value="Genomic_DNA"/>
</dbReference>
<dbReference type="PIR" id="AF1566">
    <property type="entry name" value="AF1566"/>
</dbReference>
<dbReference type="RefSeq" id="WP_003766398.1">
    <property type="nucleotide sequence ID" value="NC_003212.1"/>
</dbReference>
<dbReference type="SMR" id="Q92CV0"/>
<dbReference type="STRING" id="272626.gene:17565401"/>
<dbReference type="KEGG" id="lin:lin1071"/>
<dbReference type="eggNOG" id="COG1211">
    <property type="taxonomic scope" value="Bacteria"/>
</dbReference>
<dbReference type="HOGENOM" id="CLU_061281_2_3_9"/>
<dbReference type="OrthoDB" id="9806837at2"/>
<dbReference type="UniPathway" id="UPA00790"/>
<dbReference type="Proteomes" id="UP000002513">
    <property type="component" value="Chromosome"/>
</dbReference>
<dbReference type="GO" id="GO:0050518">
    <property type="term" value="F:2-C-methyl-D-erythritol 4-phosphate cytidylyltransferase activity"/>
    <property type="evidence" value="ECO:0007669"/>
    <property type="project" value="TreeGrafter"/>
</dbReference>
<dbReference type="GO" id="GO:0047349">
    <property type="term" value="F:D-ribitol-5-phosphate cytidylyltransferase activity"/>
    <property type="evidence" value="ECO:0007669"/>
    <property type="project" value="UniProtKB-UniRule"/>
</dbReference>
<dbReference type="GO" id="GO:0071555">
    <property type="term" value="P:cell wall organization"/>
    <property type="evidence" value="ECO:0007669"/>
    <property type="project" value="UniProtKB-KW"/>
</dbReference>
<dbReference type="GO" id="GO:0008299">
    <property type="term" value="P:isoprenoid biosynthetic process"/>
    <property type="evidence" value="ECO:0007669"/>
    <property type="project" value="InterPro"/>
</dbReference>
<dbReference type="GO" id="GO:1902012">
    <property type="term" value="P:poly(ribitol phosphate) teichoic acid biosynthetic process"/>
    <property type="evidence" value="ECO:0007669"/>
    <property type="project" value="UniProtKB-UniRule"/>
</dbReference>
<dbReference type="CDD" id="cd02516">
    <property type="entry name" value="CDP-ME_synthetase"/>
    <property type="match status" value="1"/>
</dbReference>
<dbReference type="FunFam" id="3.90.550.10:FF:000003">
    <property type="entry name" value="2-C-methyl-D-erythritol 4-phosphate cytidylyltransferase"/>
    <property type="match status" value="1"/>
</dbReference>
<dbReference type="Gene3D" id="3.90.550.10">
    <property type="entry name" value="Spore Coat Polysaccharide Biosynthesis Protein SpsA, Chain A"/>
    <property type="match status" value="1"/>
</dbReference>
<dbReference type="HAMAP" id="MF_02068">
    <property type="entry name" value="TarI"/>
    <property type="match status" value="1"/>
</dbReference>
<dbReference type="InterPro" id="IPR034683">
    <property type="entry name" value="IspD/TarI"/>
</dbReference>
<dbReference type="InterPro" id="IPR050088">
    <property type="entry name" value="IspD/TarI_cytidylyltransf_bact"/>
</dbReference>
<dbReference type="InterPro" id="IPR018294">
    <property type="entry name" value="ISPD_synthase_CS"/>
</dbReference>
<dbReference type="InterPro" id="IPR029044">
    <property type="entry name" value="Nucleotide-diphossugar_trans"/>
</dbReference>
<dbReference type="InterPro" id="IPR034709">
    <property type="entry name" value="TarI"/>
</dbReference>
<dbReference type="NCBIfam" id="NF001183">
    <property type="entry name" value="PRK00155.1-3"/>
    <property type="match status" value="1"/>
</dbReference>
<dbReference type="PANTHER" id="PTHR32125">
    <property type="entry name" value="2-C-METHYL-D-ERYTHRITOL 4-PHOSPHATE CYTIDYLYLTRANSFERASE, CHLOROPLASTIC"/>
    <property type="match status" value="1"/>
</dbReference>
<dbReference type="PANTHER" id="PTHR32125:SF8">
    <property type="entry name" value="RIBITOL-5-PHOSPHATE CYTIDYLYLTRANSFERASE"/>
    <property type="match status" value="1"/>
</dbReference>
<dbReference type="Pfam" id="PF01128">
    <property type="entry name" value="IspD"/>
    <property type="match status" value="1"/>
</dbReference>
<dbReference type="SUPFAM" id="SSF53448">
    <property type="entry name" value="Nucleotide-diphospho-sugar transferases"/>
    <property type="match status" value="1"/>
</dbReference>
<dbReference type="PROSITE" id="PS01295">
    <property type="entry name" value="ISPD"/>
    <property type="match status" value="1"/>
</dbReference>
<gene>
    <name evidence="1" type="primary">tarI</name>
    <name type="ordered locus">lin1071</name>
</gene>
<comment type="function">
    <text evidence="1">Catalyzes the transfer of the cytidylyl group of CTP to D-ribitol 5-phosphate.</text>
</comment>
<comment type="catalytic activity">
    <reaction evidence="1">
        <text>D-ribitol 5-phosphate + CTP + H(+) = CDP-L-ribitol + diphosphate</text>
        <dbReference type="Rhea" id="RHEA:12456"/>
        <dbReference type="ChEBI" id="CHEBI:15378"/>
        <dbReference type="ChEBI" id="CHEBI:33019"/>
        <dbReference type="ChEBI" id="CHEBI:37563"/>
        <dbReference type="ChEBI" id="CHEBI:57608"/>
        <dbReference type="ChEBI" id="CHEBI:57695"/>
        <dbReference type="EC" id="2.7.7.40"/>
    </reaction>
</comment>
<comment type="pathway">
    <text evidence="1">Cell wall biogenesis; poly(ribitol phosphate) teichoic acid biosynthesis.</text>
</comment>
<comment type="similarity">
    <text evidence="1">Belongs to the IspD/TarI cytidylyltransferase family. TarI subfamily.</text>
</comment>
<organism>
    <name type="scientific">Listeria innocua serovar 6a (strain ATCC BAA-680 / CLIP 11262)</name>
    <dbReference type="NCBI Taxonomy" id="272626"/>
    <lineage>
        <taxon>Bacteria</taxon>
        <taxon>Bacillati</taxon>
        <taxon>Bacillota</taxon>
        <taxon>Bacilli</taxon>
        <taxon>Bacillales</taxon>
        <taxon>Listeriaceae</taxon>
        <taxon>Listeria</taxon>
    </lineage>
</organism>
<evidence type="ECO:0000255" key="1">
    <source>
        <dbReference type="HAMAP-Rule" id="MF_02068"/>
    </source>
</evidence>
<reference key="1">
    <citation type="journal article" date="2001" name="Science">
        <title>Comparative genomics of Listeria species.</title>
        <authorList>
            <person name="Glaser P."/>
            <person name="Frangeul L."/>
            <person name="Buchrieser C."/>
            <person name="Rusniok C."/>
            <person name="Amend A."/>
            <person name="Baquero F."/>
            <person name="Berche P."/>
            <person name="Bloecker H."/>
            <person name="Brandt P."/>
            <person name="Chakraborty T."/>
            <person name="Charbit A."/>
            <person name="Chetouani F."/>
            <person name="Couve E."/>
            <person name="de Daruvar A."/>
            <person name="Dehoux P."/>
            <person name="Domann E."/>
            <person name="Dominguez-Bernal G."/>
            <person name="Duchaud E."/>
            <person name="Durant L."/>
            <person name="Dussurget O."/>
            <person name="Entian K.-D."/>
            <person name="Fsihi H."/>
            <person name="Garcia-del Portillo F."/>
            <person name="Garrido P."/>
            <person name="Gautier L."/>
            <person name="Goebel W."/>
            <person name="Gomez-Lopez N."/>
            <person name="Hain T."/>
            <person name="Hauf J."/>
            <person name="Jackson D."/>
            <person name="Jones L.-M."/>
            <person name="Kaerst U."/>
            <person name="Kreft J."/>
            <person name="Kuhn M."/>
            <person name="Kunst F."/>
            <person name="Kurapkat G."/>
            <person name="Madueno E."/>
            <person name="Maitournam A."/>
            <person name="Mata Vicente J."/>
            <person name="Ng E."/>
            <person name="Nedjari H."/>
            <person name="Nordsiek G."/>
            <person name="Novella S."/>
            <person name="de Pablos B."/>
            <person name="Perez-Diaz J.-C."/>
            <person name="Purcell R."/>
            <person name="Remmel B."/>
            <person name="Rose M."/>
            <person name="Schlueter T."/>
            <person name="Simoes N."/>
            <person name="Tierrez A."/>
            <person name="Vazquez-Boland J.-A."/>
            <person name="Voss H."/>
            <person name="Wehland J."/>
            <person name="Cossart P."/>
        </authorList>
    </citation>
    <scope>NUCLEOTIDE SEQUENCE [LARGE SCALE GENOMIC DNA]</scope>
    <source>
        <strain>ATCC BAA-680 / CLIP 11262</strain>
    </source>
</reference>